<keyword id="KW-0029">Amino-acid transport</keyword>
<keyword id="KW-0997">Cell inner membrane</keyword>
<keyword id="KW-1003">Cell membrane</keyword>
<keyword id="KW-0472">Membrane</keyword>
<keyword id="KW-0812">Transmembrane</keyword>
<keyword id="KW-1133">Transmembrane helix</keyword>
<keyword id="KW-0813">Transport</keyword>
<feature type="chain" id="PRO_0000405410" description="Aromatic amino acid transport protein AroP">
    <location>
        <begin position="1"/>
        <end position="457"/>
    </location>
</feature>
<feature type="topological domain" description="Cytoplasmic" evidence="2">
    <location>
        <begin position="1"/>
        <end position="20"/>
    </location>
</feature>
<feature type="transmembrane region" description="Helical" evidence="2">
    <location>
        <begin position="21"/>
        <end position="41"/>
    </location>
</feature>
<feature type="topological domain" description="Periplasmic" evidence="2">
    <location>
        <position position="42"/>
    </location>
</feature>
<feature type="transmembrane region" description="Helical" evidence="2">
    <location>
        <begin position="43"/>
        <end position="63"/>
    </location>
</feature>
<feature type="topological domain" description="Cytoplasmic" evidence="2">
    <location>
        <begin position="64"/>
        <end position="86"/>
    </location>
</feature>
<feature type="transmembrane region" description="Helical" evidence="2">
    <location>
        <begin position="87"/>
        <end position="107"/>
    </location>
</feature>
<feature type="topological domain" description="Periplasmic" evidence="2">
    <location>
        <begin position="108"/>
        <end position="117"/>
    </location>
</feature>
<feature type="transmembrane region" description="Helical" evidence="2">
    <location>
        <begin position="118"/>
        <end position="138"/>
    </location>
</feature>
<feature type="topological domain" description="Cytoplasmic" evidence="2">
    <location>
        <begin position="139"/>
        <end position="155"/>
    </location>
</feature>
<feature type="transmembrane region" description="Helical" evidence="2">
    <location>
        <begin position="156"/>
        <end position="176"/>
    </location>
</feature>
<feature type="topological domain" description="Periplasmic" evidence="2">
    <location>
        <begin position="177"/>
        <end position="201"/>
    </location>
</feature>
<feature type="transmembrane region" description="Helical" evidence="2">
    <location>
        <begin position="202"/>
        <end position="222"/>
    </location>
</feature>
<feature type="topological domain" description="Cytoplasmic" evidence="2">
    <location>
        <begin position="223"/>
        <end position="240"/>
    </location>
</feature>
<feature type="transmembrane region" description="Helical" evidence="2">
    <location>
        <begin position="241"/>
        <end position="261"/>
    </location>
</feature>
<feature type="topological domain" description="Periplasmic" evidence="2">
    <location>
        <begin position="262"/>
        <end position="271"/>
    </location>
</feature>
<feature type="transmembrane region" description="Helical" evidence="2">
    <location>
        <begin position="272"/>
        <end position="292"/>
    </location>
</feature>
<feature type="topological domain" description="Cytoplasmic" evidence="2">
    <location>
        <begin position="293"/>
        <end position="333"/>
    </location>
</feature>
<feature type="transmembrane region" description="Helical" evidence="2">
    <location>
        <begin position="334"/>
        <end position="354"/>
    </location>
</feature>
<feature type="topological domain" description="Periplasmic" evidence="2">
    <location>
        <begin position="355"/>
        <end position="358"/>
    </location>
</feature>
<feature type="transmembrane region" description="Helical" evidence="2">
    <location>
        <begin position="359"/>
        <end position="379"/>
    </location>
</feature>
<feature type="topological domain" description="Cytoplasmic" evidence="2">
    <location>
        <begin position="380"/>
        <end position="400"/>
    </location>
</feature>
<feature type="transmembrane region" description="Helical" evidence="2">
    <location>
        <begin position="401"/>
        <end position="421"/>
    </location>
</feature>
<feature type="topological domain" description="Periplasmic" evidence="2">
    <location>
        <begin position="422"/>
        <end position="425"/>
    </location>
</feature>
<feature type="transmembrane region" description="Helical" evidence="2">
    <location>
        <begin position="426"/>
        <end position="446"/>
    </location>
</feature>
<feature type="topological domain" description="Cytoplasmic" evidence="2">
    <location>
        <begin position="447"/>
        <end position="457"/>
    </location>
</feature>
<accession>E1W822</accession>
<accession>P0A187</accession>
<accession>Q8Z9F1</accession>
<accession>Q9L4I0</accession>
<name>AROP_SALTS</name>
<protein>
    <recommendedName>
        <fullName evidence="1">Aromatic amino acid transport protein AroP</fullName>
    </recommendedName>
    <alternativeName>
        <fullName evidence="1">Aromatic amino acid:H(+) symporter AroP</fullName>
    </alternativeName>
    <alternativeName>
        <fullName evidence="1">General aromatic amino acid permease</fullName>
    </alternativeName>
</protein>
<proteinExistence type="inferred from homology"/>
<comment type="function">
    <text evidence="1">Permease that is involved in the active transport across the cytoplasmic membrane of all three aromatic amino acids, phenylalanine, tyrosine and tryptophan.</text>
</comment>
<comment type="catalytic activity">
    <reaction evidence="1">
        <text>L-phenylalanine(in) + H(+)(in) = L-phenylalanine(out) + H(+)(out)</text>
        <dbReference type="Rhea" id="RHEA:28923"/>
        <dbReference type="ChEBI" id="CHEBI:15378"/>
        <dbReference type="ChEBI" id="CHEBI:58095"/>
    </reaction>
    <physiologicalReaction direction="right-to-left" evidence="1">
        <dbReference type="Rhea" id="RHEA:28925"/>
    </physiologicalReaction>
</comment>
<comment type="catalytic activity">
    <reaction evidence="1">
        <text>L-tryptophan(in) + H(+)(in) = L-tryptophan(out) + H(+)(out)</text>
        <dbReference type="Rhea" id="RHEA:28879"/>
        <dbReference type="ChEBI" id="CHEBI:15378"/>
        <dbReference type="ChEBI" id="CHEBI:57912"/>
    </reaction>
    <physiologicalReaction direction="right-to-left" evidence="1">
        <dbReference type="Rhea" id="RHEA:28881"/>
    </physiologicalReaction>
</comment>
<comment type="catalytic activity">
    <reaction evidence="1">
        <text>L-tyrosine(in) + H(+)(in) = L-tyrosine(out) + H(+)(out)</text>
        <dbReference type="Rhea" id="RHEA:28875"/>
        <dbReference type="ChEBI" id="CHEBI:15378"/>
        <dbReference type="ChEBI" id="CHEBI:58315"/>
    </reaction>
    <physiologicalReaction direction="right-to-left" evidence="1">
        <dbReference type="Rhea" id="RHEA:28877"/>
    </physiologicalReaction>
</comment>
<comment type="subcellular location">
    <subcellularLocation>
        <location evidence="1">Cell inner membrane</location>
        <topology evidence="1">Multi-pass membrane protein</topology>
    </subcellularLocation>
</comment>
<comment type="similarity">
    <text evidence="3">Belongs to the amino acid-polyamine-organocation (APC) superfamily. Amino acid transporter (AAT) (TC 2.A.3.1) family.</text>
</comment>
<dbReference type="EMBL" id="AJ242516">
    <property type="protein sequence ID" value="CAB89839.1"/>
    <property type="molecule type" value="Genomic_DNA"/>
</dbReference>
<dbReference type="EMBL" id="FQ312003">
    <property type="protein sequence ID" value="CBW16253.1"/>
    <property type="molecule type" value="Genomic_DNA"/>
</dbReference>
<dbReference type="RefSeq" id="WP_000969487.1">
    <property type="nucleotide sequence ID" value="NZ_QASL01000007.1"/>
</dbReference>
<dbReference type="SMR" id="E1W822"/>
<dbReference type="KEGG" id="sey:SL1344_0150"/>
<dbReference type="PATRIC" id="fig|216597.6.peg.167"/>
<dbReference type="HOGENOM" id="CLU_007946_9_3_6"/>
<dbReference type="BioCyc" id="SENT216597:SL1344_RS00765-MONOMER"/>
<dbReference type="Proteomes" id="UP000008962">
    <property type="component" value="Chromosome"/>
</dbReference>
<dbReference type="GO" id="GO:0005886">
    <property type="term" value="C:plasma membrane"/>
    <property type="evidence" value="ECO:0007669"/>
    <property type="project" value="UniProtKB-SubCell"/>
</dbReference>
<dbReference type="GO" id="GO:0006865">
    <property type="term" value="P:amino acid transport"/>
    <property type="evidence" value="ECO:0007669"/>
    <property type="project" value="UniProtKB-KW"/>
</dbReference>
<dbReference type="GO" id="GO:0055085">
    <property type="term" value="P:transmembrane transport"/>
    <property type="evidence" value="ECO:0007669"/>
    <property type="project" value="InterPro"/>
</dbReference>
<dbReference type="FunFam" id="1.20.1740.10:FF:000001">
    <property type="entry name" value="Amino acid permease"/>
    <property type="match status" value="1"/>
</dbReference>
<dbReference type="Gene3D" id="1.20.1740.10">
    <property type="entry name" value="Amino acid/polyamine transporter I"/>
    <property type="match status" value="1"/>
</dbReference>
<dbReference type="InterPro" id="IPR004841">
    <property type="entry name" value="AA-permease/SLC12A_dom"/>
</dbReference>
<dbReference type="InterPro" id="IPR004840">
    <property type="entry name" value="Amino_acid_permease_CS"/>
</dbReference>
<dbReference type="NCBIfam" id="NF007594">
    <property type="entry name" value="PRK10238.1"/>
    <property type="match status" value="1"/>
</dbReference>
<dbReference type="PANTHER" id="PTHR43495:SF4">
    <property type="entry name" value="AROMATIC AMINO ACID TRANSPORT PROTEIN AROP"/>
    <property type="match status" value="1"/>
</dbReference>
<dbReference type="PANTHER" id="PTHR43495">
    <property type="entry name" value="GABA PERMEASE"/>
    <property type="match status" value="1"/>
</dbReference>
<dbReference type="Pfam" id="PF00324">
    <property type="entry name" value="AA_permease"/>
    <property type="match status" value="1"/>
</dbReference>
<dbReference type="PIRSF" id="PIRSF006060">
    <property type="entry name" value="AA_transporter"/>
    <property type="match status" value="1"/>
</dbReference>
<dbReference type="PROSITE" id="PS00218">
    <property type="entry name" value="AMINO_ACID_PERMEASE_1"/>
    <property type="match status" value="1"/>
</dbReference>
<sequence>MMDSQQHGEQLKRGLKNRHIQLIALGGAIGTGLFLGSASVIQSAGPGIILGYAIAGFIAFLIMRQLGEMVVEEPVAGSFSHFAYKYWGGFAGFASGWNYWVLYVLVAMAELTAVGKYIQFWYPEIPTWASAAAFFVIINAINLTNVKVFGEMEFWFAIIKVIAVIAMILFGAWLLFSDTAGPQATVRNLWEQGGFLPHGWTGLVMMMAIIMFSFGGLELVGITAAEADNPEQSIPKATNQVIYRILIFYIGSLAVLLSLLPWTRVTADTSPFVLIFHELGDTFVANALNIVVLTAALSVYNSCVYCNSRMLFGLAQQGNAPKALLNVDKRGVPVSSILVSAVVTALCVLLNYLAPESAFGLLMALVVSALVINWAMISLAHMMFRRAKQQQGVKTRFPALFYPFGNVLCLLFMAAVLIIMLMTPGMAISVWLIPVWLLILGVGYLCKEKTAKTVKAH</sequence>
<gene>
    <name type="primary">aroP</name>
    <name type="ordered locus">SL1344_0150</name>
</gene>
<reference key="1">
    <citation type="submission" date="1999-05" db="EMBL/GenBank/DDBJ databases">
        <title>Characterization of a Salmonella-specific region located between ampE and aroP genes.</title>
        <authorList>
            <person name="Cano D."/>
            <person name="Casadesus J."/>
            <person name="Garcia-del Portillo F."/>
        </authorList>
    </citation>
    <scope>NUCLEOTIDE SEQUENCE [GENOMIC DNA]</scope>
    <source>
        <strain>SL1344</strain>
    </source>
</reference>
<reference key="2">
    <citation type="journal article" date="2012" name="Proc. Natl. Acad. Sci. U.S.A.">
        <title>The transcriptional landscape and small RNAs of Salmonella enterica serovar Typhimurium.</title>
        <authorList>
            <person name="Kroger C."/>
            <person name="Dillon S.C."/>
            <person name="Cameron A.D."/>
            <person name="Papenfort K."/>
            <person name="Sivasankaran S.K."/>
            <person name="Hokamp K."/>
            <person name="Chao Y."/>
            <person name="Sittka A."/>
            <person name="Hebrard M."/>
            <person name="Handler K."/>
            <person name="Colgan A."/>
            <person name="Leekitcharoenphon P."/>
            <person name="Langridge G.C."/>
            <person name="Lohan A.J."/>
            <person name="Loftus B."/>
            <person name="Lucchini S."/>
            <person name="Ussery D.W."/>
            <person name="Dorman C.J."/>
            <person name="Thomson N.R."/>
            <person name="Vogel J."/>
            <person name="Hinton J.C."/>
        </authorList>
    </citation>
    <scope>NUCLEOTIDE SEQUENCE [LARGE SCALE GENOMIC DNA]</scope>
    <source>
        <strain>SL1344</strain>
    </source>
</reference>
<organism>
    <name type="scientific">Salmonella typhimurium (strain SL1344)</name>
    <dbReference type="NCBI Taxonomy" id="216597"/>
    <lineage>
        <taxon>Bacteria</taxon>
        <taxon>Pseudomonadati</taxon>
        <taxon>Pseudomonadota</taxon>
        <taxon>Gammaproteobacteria</taxon>
        <taxon>Enterobacterales</taxon>
        <taxon>Enterobacteriaceae</taxon>
        <taxon>Salmonella</taxon>
    </lineage>
</organism>
<evidence type="ECO:0000250" key="1">
    <source>
        <dbReference type="UniProtKB" id="P15993"/>
    </source>
</evidence>
<evidence type="ECO:0000255" key="2"/>
<evidence type="ECO:0000305" key="3"/>